<organism>
    <name type="scientific">Clostridium kluyveri (strain ATCC 8527 / DSM 555 / NBRC 12016 / NCIMB 10680 / K1)</name>
    <dbReference type="NCBI Taxonomy" id="431943"/>
    <lineage>
        <taxon>Bacteria</taxon>
        <taxon>Bacillati</taxon>
        <taxon>Bacillota</taxon>
        <taxon>Clostridia</taxon>
        <taxon>Eubacteriales</taxon>
        <taxon>Clostridiaceae</taxon>
        <taxon>Clostridium</taxon>
    </lineage>
</organism>
<name>HIS8_CLOK5</name>
<sequence length="351" mass="40173">MIEKLFKQNLQKFVPYTVPKLDYEIKLDANESFLKLDDYMMGKILNKIKDVEFNRYPDAGAEKVCRAYSKYVGINRENIMAGNGSDELIQIIIAALVDKNENIMTVEPDFSMYGNYSEIGGGKALIFQLDEEFNLDVDKLIESANVEKVKVLFLSNPNNPTGKVLKREQIFKILNGCDCAVVIDEAYVEFHEESIVDSIYEYENLIVLRTCSKAMASAAIRLGFLITNSFMLNEIKKAKPPFNVSSVTQAIGEAVLEETEYIKKSLENIKNERSFLIDKLSAFKEIKLYPTCANFILIKFKDAEFVYKYLLENKIVVRNYKQGRLKDFLRITVGSREENEAVINNLSKILK</sequence>
<keyword id="KW-0028">Amino-acid biosynthesis</keyword>
<keyword id="KW-0032">Aminotransferase</keyword>
<keyword id="KW-0368">Histidine biosynthesis</keyword>
<keyword id="KW-0663">Pyridoxal phosphate</keyword>
<keyword id="KW-1185">Reference proteome</keyword>
<keyword id="KW-0808">Transferase</keyword>
<proteinExistence type="inferred from homology"/>
<feature type="chain" id="PRO_1000084189" description="Histidinol-phosphate aminotransferase">
    <location>
        <begin position="1"/>
        <end position="351"/>
    </location>
</feature>
<feature type="modified residue" description="N6-(pyridoxal phosphate)lysine" evidence="1">
    <location>
        <position position="213"/>
    </location>
</feature>
<accession>A5N7Q7</accession>
<evidence type="ECO:0000255" key="1">
    <source>
        <dbReference type="HAMAP-Rule" id="MF_01023"/>
    </source>
</evidence>
<reference key="1">
    <citation type="journal article" date="2008" name="Proc. Natl. Acad. Sci. U.S.A.">
        <title>The genome of Clostridium kluyveri, a strict anaerobe with unique metabolic features.</title>
        <authorList>
            <person name="Seedorf H."/>
            <person name="Fricke W.F."/>
            <person name="Veith B."/>
            <person name="Brueggemann H."/>
            <person name="Liesegang H."/>
            <person name="Strittmatter A."/>
            <person name="Miethke M."/>
            <person name="Buckel W."/>
            <person name="Hinderberger J."/>
            <person name="Li F."/>
            <person name="Hagemeier C."/>
            <person name="Thauer R.K."/>
            <person name="Gottschalk G."/>
        </authorList>
    </citation>
    <scope>NUCLEOTIDE SEQUENCE [LARGE SCALE GENOMIC DNA]</scope>
    <source>
        <strain>ATCC 8527 / DSM 555 / NBRC 12016 / NCIMB 10680 / K1</strain>
    </source>
</reference>
<gene>
    <name evidence="1" type="primary">hisC</name>
    <name type="ordered locus">CKL_1296</name>
</gene>
<comment type="catalytic activity">
    <reaction evidence="1">
        <text>L-histidinol phosphate + 2-oxoglutarate = 3-(imidazol-4-yl)-2-oxopropyl phosphate + L-glutamate</text>
        <dbReference type="Rhea" id="RHEA:23744"/>
        <dbReference type="ChEBI" id="CHEBI:16810"/>
        <dbReference type="ChEBI" id="CHEBI:29985"/>
        <dbReference type="ChEBI" id="CHEBI:57766"/>
        <dbReference type="ChEBI" id="CHEBI:57980"/>
        <dbReference type="EC" id="2.6.1.9"/>
    </reaction>
</comment>
<comment type="cofactor">
    <cofactor evidence="1">
        <name>pyridoxal 5'-phosphate</name>
        <dbReference type="ChEBI" id="CHEBI:597326"/>
    </cofactor>
</comment>
<comment type="pathway">
    <text evidence="1">Amino-acid biosynthesis; L-histidine biosynthesis; L-histidine from 5-phospho-alpha-D-ribose 1-diphosphate: step 7/9.</text>
</comment>
<comment type="subunit">
    <text evidence="1">Homodimer.</text>
</comment>
<comment type="similarity">
    <text evidence="1">Belongs to the class-II pyridoxal-phosphate-dependent aminotransferase family. Histidinol-phosphate aminotransferase subfamily.</text>
</comment>
<protein>
    <recommendedName>
        <fullName evidence="1">Histidinol-phosphate aminotransferase</fullName>
        <ecNumber evidence="1">2.6.1.9</ecNumber>
    </recommendedName>
    <alternativeName>
        <fullName evidence="1">Imidazole acetol-phosphate transaminase</fullName>
    </alternativeName>
</protein>
<dbReference type="EC" id="2.6.1.9" evidence="1"/>
<dbReference type="EMBL" id="CP000673">
    <property type="protein sequence ID" value="EDK33338.1"/>
    <property type="molecule type" value="Genomic_DNA"/>
</dbReference>
<dbReference type="RefSeq" id="WP_012101683.1">
    <property type="nucleotide sequence ID" value="NC_009706.1"/>
</dbReference>
<dbReference type="SMR" id="A5N7Q7"/>
<dbReference type="STRING" id="431943.CKL_1296"/>
<dbReference type="KEGG" id="ckl:CKL_1296"/>
<dbReference type="eggNOG" id="COG0079">
    <property type="taxonomic scope" value="Bacteria"/>
</dbReference>
<dbReference type="HOGENOM" id="CLU_017584_3_1_9"/>
<dbReference type="UniPathway" id="UPA00031">
    <property type="reaction ID" value="UER00012"/>
</dbReference>
<dbReference type="Proteomes" id="UP000002411">
    <property type="component" value="Chromosome"/>
</dbReference>
<dbReference type="GO" id="GO:0004400">
    <property type="term" value="F:histidinol-phosphate transaminase activity"/>
    <property type="evidence" value="ECO:0007669"/>
    <property type="project" value="UniProtKB-UniRule"/>
</dbReference>
<dbReference type="GO" id="GO:0030170">
    <property type="term" value="F:pyridoxal phosphate binding"/>
    <property type="evidence" value="ECO:0007669"/>
    <property type="project" value="InterPro"/>
</dbReference>
<dbReference type="GO" id="GO:0000105">
    <property type="term" value="P:L-histidine biosynthetic process"/>
    <property type="evidence" value="ECO:0007669"/>
    <property type="project" value="UniProtKB-UniRule"/>
</dbReference>
<dbReference type="CDD" id="cd00609">
    <property type="entry name" value="AAT_like"/>
    <property type="match status" value="1"/>
</dbReference>
<dbReference type="Gene3D" id="3.90.1150.10">
    <property type="entry name" value="Aspartate Aminotransferase, domain 1"/>
    <property type="match status" value="1"/>
</dbReference>
<dbReference type="Gene3D" id="3.40.640.10">
    <property type="entry name" value="Type I PLP-dependent aspartate aminotransferase-like (Major domain)"/>
    <property type="match status" value="1"/>
</dbReference>
<dbReference type="HAMAP" id="MF_01023">
    <property type="entry name" value="HisC_aminotrans_2"/>
    <property type="match status" value="1"/>
</dbReference>
<dbReference type="InterPro" id="IPR004839">
    <property type="entry name" value="Aminotransferase_I/II_large"/>
</dbReference>
<dbReference type="InterPro" id="IPR005861">
    <property type="entry name" value="HisP_aminotrans"/>
</dbReference>
<dbReference type="InterPro" id="IPR015424">
    <property type="entry name" value="PyrdxlP-dep_Trfase"/>
</dbReference>
<dbReference type="InterPro" id="IPR015421">
    <property type="entry name" value="PyrdxlP-dep_Trfase_major"/>
</dbReference>
<dbReference type="InterPro" id="IPR015422">
    <property type="entry name" value="PyrdxlP-dep_Trfase_small"/>
</dbReference>
<dbReference type="NCBIfam" id="TIGR01141">
    <property type="entry name" value="hisC"/>
    <property type="match status" value="1"/>
</dbReference>
<dbReference type="PANTHER" id="PTHR42885:SF2">
    <property type="entry name" value="HISTIDINOL-PHOSPHATE AMINOTRANSFERASE"/>
    <property type="match status" value="1"/>
</dbReference>
<dbReference type="PANTHER" id="PTHR42885">
    <property type="entry name" value="HISTIDINOL-PHOSPHATE AMINOTRANSFERASE-RELATED"/>
    <property type="match status" value="1"/>
</dbReference>
<dbReference type="Pfam" id="PF00155">
    <property type="entry name" value="Aminotran_1_2"/>
    <property type="match status" value="1"/>
</dbReference>
<dbReference type="SUPFAM" id="SSF53383">
    <property type="entry name" value="PLP-dependent transferases"/>
    <property type="match status" value="1"/>
</dbReference>